<reference key="1">
    <citation type="journal article" date="2000" name="Mol. Gen. Genet.">
        <title>Complete nucleotide sequence of the Oenothera elata plastid chromosome, representing plastome I of the five distinguishable Euoenothera plastomes.</title>
        <authorList>
            <person name="Hupfer H."/>
            <person name="Swiatek M."/>
            <person name="Hornung S."/>
            <person name="Herrmann R.G."/>
            <person name="Maier R.M."/>
            <person name="Chiu W.-L."/>
            <person name="Sears B."/>
        </authorList>
    </citation>
    <scope>NUCLEOTIDE SEQUENCE [LARGE SCALE GENOMIC DNA]</scope>
    <source>
        <strain>cv. Johansen</strain>
    </source>
</reference>
<comment type="function">
    <text evidence="1">Required during biogenesis of c-type cytochromes (cytochrome c6 and cytochrome f) at the step of heme attachment.</text>
</comment>
<comment type="subunit">
    <text evidence="1">May interact with Ccs1.</text>
</comment>
<comment type="subcellular location">
    <subcellularLocation>
        <location evidence="1">Plastid</location>
        <location evidence="1">Chloroplast thylakoid membrane</location>
        <topology evidence="1">Multi-pass membrane protein</topology>
    </subcellularLocation>
</comment>
<comment type="similarity">
    <text evidence="1">Belongs to the CcmF/CycK/Ccl1/NrfE/CcsA family.</text>
</comment>
<organism>
    <name type="scientific">Oenothera elata subsp. hookeri</name>
    <name type="common">Hooker's evening primrose</name>
    <name type="synonym">Oenothera hookeri</name>
    <dbReference type="NCBI Taxonomy" id="85636"/>
    <lineage>
        <taxon>Eukaryota</taxon>
        <taxon>Viridiplantae</taxon>
        <taxon>Streptophyta</taxon>
        <taxon>Embryophyta</taxon>
        <taxon>Tracheophyta</taxon>
        <taxon>Spermatophyta</taxon>
        <taxon>Magnoliopsida</taxon>
        <taxon>eudicotyledons</taxon>
        <taxon>Gunneridae</taxon>
        <taxon>Pentapetalae</taxon>
        <taxon>rosids</taxon>
        <taxon>malvids</taxon>
        <taxon>Myrtales</taxon>
        <taxon>Onagraceae</taxon>
        <taxon>Onagroideae</taxon>
        <taxon>Onagreae</taxon>
        <taxon>Oenothera</taxon>
    </lineage>
</organism>
<keyword id="KW-0150">Chloroplast</keyword>
<keyword id="KW-0201">Cytochrome c-type biogenesis</keyword>
<keyword id="KW-0472">Membrane</keyword>
<keyword id="KW-0934">Plastid</keyword>
<keyword id="KW-0793">Thylakoid</keyword>
<keyword id="KW-0812">Transmembrane</keyword>
<keyword id="KW-1133">Transmembrane helix</keyword>
<gene>
    <name evidence="1" type="primary">ccsA</name>
</gene>
<sequence>MIFYTLEHILTHISFSLVSIGITIFLITLSVDEIIGLYDSSEKGVIGTFLCITGLLVTRWAYSGHFPLSNLYESLLFLSWSFAIIHMFPYFKKQKSYVRTITSSSTIFTQGLVTSGLLSEMQQSEILVPALQSQWLMMHVSMMVLGYAALLCGSLLSVALLVITFRKALRIFSKKKAFLKDSFSFVEIQYRNEPSNVLLSTSFISSKNYYRAQLIQQLDRWSSRIISLGFIFLTIGILSGAVWANEAWGSYWNWDPKETWAFITWTMFAIYLHTRTNPNFQSVNSAIVAFLGFIIIWICYFGVNLLGIGLHSYGSFNLH</sequence>
<geneLocation type="chloroplast"/>
<proteinExistence type="inferred from homology"/>
<protein>
    <recommendedName>
        <fullName evidence="1">Cytochrome c biogenesis protein CcsA</fullName>
    </recommendedName>
</protein>
<feature type="chain" id="PRO_0000201611" description="Cytochrome c biogenesis protein CcsA">
    <location>
        <begin position="1"/>
        <end position="319"/>
    </location>
</feature>
<feature type="transmembrane region" description="Helical" evidence="1">
    <location>
        <begin position="9"/>
        <end position="29"/>
    </location>
</feature>
<feature type="transmembrane region" description="Helical" evidence="1">
    <location>
        <begin position="44"/>
        <end position="64"/>
    </location>
</feature>
<feature type="transmembrane region" description="Helical" evidence="1">
    <location>
        <begin position="71"/>
        <end position="91"/>
    </location>
</feature>
<feature type="transmembrane region" description="Helical" evidence="1">
    <location>
        <begin position="143"/>
        <end position="163"/>
    </location>
</feature>
<feature type="transmembrane region" description="Helical" evidence="1">
    <location>
        <begin position="225"/>
        <end position="245"/>
    </location>
</feature>
<feature type="transmembrane region" description="Helical" evidence="1">
    <location>
        <begin position="259"/>
        <end position="273"/>
    </location>
</feature>
<feature type="transmembrane region" description="Helical" evidence="1">
    <location>
        <begin position="286"/>
        <end position="306"/>
    </location>
</feature>
<accession>Q9MTI2</accession>
<name>CCSA_OENEH</name>
<evidence type="ECO:0000255" key="1">
    <source>
        <dbReference type="HAMAP-Rule" id="MF_01391"/>
    </source>
</evidence>
<dbReference type="EMBL" id="AJ271079">
    <property type="protein sequence ID" value="CAB67219.1"/>
    <property type="molecule type" value="Genomic_DNA"/>
</dbReference>
<dbReference type="RefSeq" id="NP_084751.1">
    <property type="nucleotide sequence ID" value="NC_002693.2"/>
</dbReference>
<dbReference type="SMR" id="Q9MTI2"/>
<dbReference type="GeneID" id="802813"/>
<dbReference type="GO" id="GO:0009535">
    <property type="term" value="C:chloroplast thylakoid membrane"/>
    <property type="evidence" value="ECO:0007669"/>
    <property type="project" value="UniProtKB-SubCell"/>
</dbReference>
<dbReference type="GO" id="GO:0005886">
    <property type="term" value="C:plasma membrane"/>
    <property type="evidence" value="ECO:0007669"/>
    <property type="project" value="TreeGrafter"/>
</dbReference>
<dbReference type="GO" id="GO:0020037">
    <property type="term" value="F:heme binding"/>
    <property type="evidence" value="ECO:0007669"/>
    <property type="project" value="InterPro"/>
</dbReference>
<dbReference type="GO" id="GO:0017004">
    <property type="term" value="P:cytochrome complex assembly"/>
    <property type="evidence" value="ECO:0007669"/>
    <property type="project" value="UniProtKB-UniRule"/>
</dbReference>
<dbReference type="HAMAP" id="MF_01391">
    <property type="entry name" value="CytC_CcsA"/>
    <property type="match status" value="1"/>
</dbReference>
<dbReference type="InterPro" id="IPR002541">
    <property type="entry name" value="Cyt_c_assembly"/>
</dbReference>
<dbReference type="InterPro" id="IPR017562">
    <property type="entry name" value="Cyt_c_biogenesis_CcsA"/>
</dbReference>
<dbReference type="InterPro" id="IPR045062">
    <property type="entry name" value="Cyt_c_biogenesis_CcsA/CcmC"/>
</dbReference>
<dbReference type="NCBIfam" id="TIGR03144">
    <property type="entry name" value="cytochr_II_ccsB"/>
    <property type="match status" value="1"/>
</dbReference>
<dbReference type="PANTHER" id="PTHR30071:SF1">
    <property type="entry name" value="CYTOCHROME B_B6 PROTEIN-RELATED"/>
    <property type="match status" value="1"/>
</dbReference>
<dbReference type="PANTHER" id="PTHR30071">
    <property type="entry name" value="HEME EXPORTER PROTEIN C"/>
    <property type="match status" value="1"/>
</dbReference>
<dbReference type="Pfam" id="PF01578">
    <property type="entry name" value="Cytochrom_C_asm"/>
    <property type="match status" value="1"/>
</dbReference>